<gene>
    <name evidence="1" type="primary">entS</name>
    <name type="ordered locus">SDY_0522</name>
</gene>
<feature type="chain" id="PRO_0000227656" description="Enterobactin exporter EntS">
    <location>
        <begin position="1"/>
        <end position="416"/>
    </location>
</feature>
<feature type="topological domain" description="Cytoplasmic" evidence="1">
    <location>
        <begin position="1"/>
        <end position="21"/>
    </location>
</feature>
<feature type="transmembrane region" description="Helical" evidence="1">
    <location>
        <begin position="22"/>
        <end position="42"/>
    </location>
</feature>
<feature type="topological domain" description="Periplasmic" evidence="1">
    <location>
        <begin position="43"/>
        <end position="55"/>
    </location>
</feature>
<feature type="transmembrane region" description="Helical" evidence="1">
    <location>
        <begin position="56"/>
        <end position="76"/>
    </location>
</feature>
<feature type="topological domain" description="Cytoplasmic" evidence="1">
    <location>
        <begin position="77"/>
        <end position="83"/>
    </location>
</feature>
<feature type="transmembrane region" description="Helical" evidence="1">
    <location>
        <begin position="84"/>
        <end position="104"/>
    </location>
</feature>
<feature type="topological domain" description="Periplasmic" evidence="1">
    <location>
        <begin position="105"/>
        <end position="109"/>
    </location>
</feature>
<feature type="transmembrane region" description="Helical" evidence="1">
    <location>
        <begin position="110"/>
        <end position="130"/>
    </location>
</feature>
<feature type="topological domain" description="Cytoplasmic" evidence="1">
    <location>
        <begin position="131"/>
        <end position="156"/>
    </location>
</feature>
<feature type="transmembrane region" description="Helical" evidence="1">
    <location>
        <begin position="157"/>
        <end position="177"/>
    </location>
</feature>
<feature type="topological domain" description="Periplasmic" evidence="1">
    <location>
        <position position="178"/>
    </location>
</feature>
<feature type="transmembrane region" description="Helical" evidence="1">
    <location>
        <begin position="179"/>
        <end position="199"/>
    </location>
</feature>
<feature type="topological domain" description="Cytoplasmic" evidence="1">
    <location>
        <begin position="200"/>
        <end position="218"/>
    </location>
</feature>
<feature type="transmembrane region" description="Helical" evidence="1">
    <location>
        <begin position="219"/>
        <end position="239"/>
    </location>
</feature>
<feature type="topological domain" description="Periplasmic" evidence="1">
    <location>
        <begin position="240"/>
        <end position="256"/>
    </location>
</feature>
<feature type="transmembrane region" description="Helical" evidence="1">
    <location>
        <begin position="257"/>
        <end position="277"/>
    </location>
</feature>
<feature type="topological domain" description="Cytoplasmic" evidence="1">
    <location>
        <begin position="278"/>
        <end position="287"/>
    </location>
</feature>
<feature type="transmembrane region" description="Helical" evidence="1">
    <location>
        <begin position="288"/>
        <end position="307"/>
    </location>
</feature>
<feature type="topological domain" description="Periplasmic" evidence="1">
    <location>
        <begin position="308"/>
        <end position="313"/>
    </location>
</feature>
<feature type="transmembrane region" description="Helical" evidence="1">
    <location>
        <begin position="314"/>
        <end position="336"/>
    </location>
</feature>
<feature type="topological domain" description="Cytoplasmic" evidence="1">
    <location>
        <begin position="337"/>
        <end position="356"/>
    </location>
</feature>
<feature type="transmembrane region" description="Helical" evidence="1">
    <location>
        <begin position="357"/>
        <end position="377"/>
    </location>
</feature>
<feature type="topological domain" description="Periplasmic" evidence="1">
    <location>
        <position position="378"/>
    </location>
</feature>
<feature type="transmembrane region" description="Helical" evidence="1">
    <location>
        <begin position="379"/>
        <end position="399"/>
    </location>
</feature>
<feature type="topological domain" description="Cytoplasmic" evidence="1">
    <location>
        <begin position="400"/>
        <end position="416"/>
    </location>
</feature>
<reference key="1">
    <citation type="journal article" date="2005" name="Nucleic Acids Res.">
        <title>Genome dynamics and diversity of Shigella species, the etiologic agents of bacillary dysentery.</title>
        <authorList>
            <person name="Yang F."/>
            <person name="Yang J."/>
            <person name="Zhang X."/>
            <person name="Chen L."/>
            <person name="Jiang Y."/>
            <person name="Yan Y."/>
            <person name="Tang X."/>
            <person name="Wang J."/>
            <person name="Xiong Z."/>
            <person name="Dong J."/>
            <person name="Xue Y."/>
            <person name="Zhu Y."/>
            <person name="Xu X."/>
            <person name="Sun L."/>
            <person name="Chen S."/>
            <person name="Nie H."/>
            <person name="Peng J."/>
            <person name="Xu J."/>
            <person name="Wang Y."/>
            <person name="Yuan Z."/>
            <person name="Wen Y."/>
            <person name="Yao Z."/>
            <person name="Shen Y."/>
            <person name="Qiang B."/>
            <person name="Hou Y."/>
            <person name="Yu J."/>
            <person name="Jin Q."/>
        </authorList>
    </citation>
    <scope>NUCLEOTIDE SEQUENCE [LARGE SCALE GENOMIC DNA]</scope>
    <source>
        <strain>Sd197</strain>
    </source>
</reference>
<sequence length="416" mass="43323">MNKQSWLLNLSLLKTHPAFRAVFLARFISIVSLGLLGVAVPVQIQMMTHSTWQVGLSVTLTGGAMFVGLMVGGVLADRYERKKVILLARGTCGIGFIGLCLNALLPEPSLLAIYLLGLWDGFFASLGVTALLAATPALVGRENLMQAGAITMLTVRLGSVNSPMIGGLLLAIGGVAWNYGLAAAGTFITLLPLLSLPALPPPPQPREHPLKSLLAGFRFLLASPLVGGIALLGGLLTMASAVRVLYPALADNWQMSAAQIGFLYAAIPLGAAIGALTSGKLAHSARPGLLMLLSTLGSFLAIGLFGLMPMWILGVVCLALFGWLSAVSSLLQYTMLQTQTPEVMLGRINGLWTAQNVTGDAIGAALLGGLGAMMTPVASASASGFGLLIIGVLLLLVLVELRHFRQTPPQVTASDS</sequence>
<protein>
    <recommendedName>
        <fullName evidence="1">Enterobactin exporter EntS</fullName>
    </recommendedName>
</protein>
<organism>
    <name type="scientific">Shigella dysenteriae serotype 1 (strain Sd197)</name>
    <dbReference type="NCBI Taxonomy" id="300267"/>
    <lineage>
        <taxon>Bacteria</taxon>
        <taxon>Pseudomonadati</taxon>
        <taxon>Pseudomonadota</taxon>
        <taxon>Gammaproteobacteria</taxon>
        <taxon>Enterobacterales</taxon>
        <taxon>Enterobacteriaceae</taxon>
        <taxon>Shigella</taxon>
    </lineage>
</organism>
<accession>Q32IX8</accession>
<evidence type="ECO:0000255" key="1">
    <source>
        <dbReference type="HAMAP-Rule" id="MF_01436"/>
    </source>
</evidence>
<name>ENTS_SHIDS</name>
<keyword id="KW-0997">Cell inner membrane</keyword>
<keyword id="KW-1003">Cell membrane</keyword>
<keyword id="KW-0472">Membrane</keyword>
<keyword id="KW-1185">Reference proteome</keyword>
<keyword id="KW-0812">Transmembrane</keyword>
<keyword id="KW-1133">Transmembrane helix</keyword>
<keyword id="KW-0813">Transport</keyword>
<comment type="function">
    <text evidence="1">Component of an export pathway for enterobactin.</text>
</comment>
<comment type="subcellular location">
    <subcellularLocation>
        <location evidence="1">Cell inner membrane</location>
        <topology evidence="1">Multi-pass membrane protein</topology>
    </subcellularLocation>
</comment>
<comment type="similarity">
    <text evidence="1">Belongs to the major facilitator superfamily. EntS (TC 2.A.1.38) family.</text>
</comment>
<dbReference type="EMBL" id="CP000034">
    <property type="protein sequence ID" value="ABB60729.1"/>
    <property type="molecule type" value="Genomic_DNA"/>
</dbReference>
<dbReference type="RefSeq" id="WP_001041801.1">
    <property type="nucleotide sequence ID" value="NC_007606.1"/>
</dbReference>
<dbReference type="RefSeq" id="YP_402218.1">
    <property type="nucleotide sequence ID" value="NC_007606.1"/>
</dbReference>
<dbReference type="SMR" id="Q32IX8"/>
<dbReference type="STRING" id="300267.SDY_0522"/>
<dbReference type="EnsemblBacteria" id="ABB60729">
    <property type="protein sequence ID" value="ABB60729"/>
    <property type="gene ID" value="SDY_0522"/>
</dbReference>
<dbReference type="KEGG" id="sdy:SDY_0522"/>
<dbReference type="PATRIC" id="fig|300267.13.peg.615"/>
<dbReference type="HOGENOM" id="CLU_034180_11_0_6"/>
<dbReference type="Proteomes" id="UP000002716">
    <property type="component" value="Chromosome"/>
</dbReference>
<dbReference type="GO" id="GO:0005886">
    <property type="term" value="C:plasma membrane"/>
    <property type="evidence" value="ECO:0007669"/>
    <property type="project" value="UniProtKB-SubCell"/>
</dbReference>
<dbReference type="GO" id="GO:0042931">
    <property type="term" value="F:enterobactin transmembrane transporter activity"/>
    <property type="evidence" value="ECO:0007669"/>
    <property type="project" value="InterPro"/>
</dbReference>
<dbReference type="CDD" id="cd06173">
    <property type="entry name" value="MFS_MefA_like"/>
    <property type="match status" value="1"/>
</dbReference>
<dbReference type="FunFam" id="1.20.1250.20:FF:000056">
    <property type="entry name" value="Enterobactin exporter EntS"/>
    <property type="match status" value="1"/>
</dbReference>
<dbReference type="Gene3D" id="1.20.1250.20">
    <property type="entry name" value="MFS general substrate transporter like domains"/>
    <property type="match status" value="1"/>
</dbReference>
<dbReference type="HAMAP" id="MF_01436">
    <property type="entry name" value="MFS_EntS"/>
    <property type="match status" value="1"/>
</dbReference>
<dbReference type="InterPro" id="IPR023722">
    <property type="entry name" value="Enterobactin_exp_EntS"/>
</dbReference>
<dbReference type="InterPro" id="IPR020846">
    <property type="entry name" value="MFS_dom"/>
</dbReference>
<dbReference type="InterPro" id="IPR036259">
    <property type="entry name" value="MFS_trans_sf"/>
</dbReference>
<dbReference type="InterPro" id="IPR010290">
    <property type="entry name" value="TM_effector"/>
</dbReference>
<dbReference type="NCBIfam" id="NF007792">
    <property type="entry name" value="PRK10489.1"/>
    <property type="match status" value="1"/>
</dbReference>
<dbReference type="PANTHER" id="PTHR23513:SF9">
    <property type="entry name" value="ENTEROBACTIN EXPORTER ENTS"/>
    <property type="match status" value="1"/>
</dbReference>
<dbReference type="PANTHER" id="PTHR23513">
    <property type="entry name" value="INTEGRAL MEMBRANE EFFLUX PROTEIN-RELATED"/>
    <property type="match status" value="1"/>
</dbReference>
<dbReference type="Pfam" id="PF05977">
    <property type="entry name" value="MFS_3"/>
    <property type="match status" value="1"/>
</dbReference>
<dbReference type="SUPFAM" id="SSF103473">
    <property type="entry name" value="MFS general substrate transporter"/>
    <property type="match status" value="1"/>
</dbReference>
<dbReference type="PROSITE" id="PS50850">
    <property type="entry name" value="MFS"/>
    <property type="match status" value="1"/>
</dbReference>
<proteinExistence type="inferred from homology"/>